<organism>
    <name type="scientific">Escherichia coli O9:H4 (strain HS)</name>
    <dbReference type="NCBI Taxonomy" id="331112"/>
    <lineage>
        <taxon>Bacteria</taxon>
        <taxon>Pseudomonadati</taxon>
        <taxon>Pseudomonadota</taxon>
        <taxon>Gammaproteobacteria</taxon>
        <taxon>Enterobacterales</taxon>
        <taxon>Enterobacteriaceae</taxon>
        <taxon>Escherichia</taxon>
    </lineage>
</organism>
<feature type="chain" id="PRO_1000059222" description="Bifunctional uridylyltransferase/uridylyl-removing enzyme">
    <location>
        <begin position="1"/>
        <end position="890"/>
    </location>
</feature>
<feature type="domain" description="HD" evidence="2">
    <location>
        <begin position="468"/>
        <end position="590"/>
    </location>
</feature>
<feature type="domain" description="ACT 1" evidence="1">
    <location>
        <begin position="709"/>
        <end position="789"/>
    </location>
</feature>
<feature type="domain" description="ACT 2" evidence="1">
    <location>
        <begin position="816"/>
        <end position="890"/>
    </location>
</feature>
<feature type="region of interest" description="Uridylyltransferase">
    <location>
        <begin position="1"/>
        <end position="349"/>
    </location>
</feature>
<feature type="region of interest" description="Uridylyl-removing">
    <location>
        <begin position="350"/>
        <end position="708"/>
    </location>
</feature>
<evidence type="ECO:0000255" key="1">
    <source>
        <dbReference type="HAMAP-Rule" id="MF_00277"/>
    </source>
</evidence>
<evidence type="ECO:0000255" key="2">
    <source>
        <dbReference type="PROSITE-ProRule" id="PRU01175"/>
    </source>
</evidence>
<protein>
    <recommendedName>
        <fullName evidence="1">Bifunctional uridylyltransferase/uridylyl-removing enzyme</fullName>
        <shortName evidence="1">UTase/UR</shortName>
    </recommendedName>
    <alternativeName>
        <fullName evidence="1">Bifunctional [protein-PII] modification enzyme</fullName>
    </alternativeName>
    <alternativeName>
        <fullName evidence="1">Bifunctional nitrogen sensor protein</fullName>
    </alternativeName>
    <domain>
        <recommendedName>
            <fullName evidence="1">[Protein-PII] uridylyltransferase</fullName>
            <shortName evidence="1">PII uridylyltransferase</shortName>
            <shortName evidence="1">UTase</shortName>
            <ecNumber evidence="1">2.7.7.59</ecNumber>
        </recommendedName>
    </domain>
    <domain>
        <recommendedName>
            <fullName evidence="1">[Protein-PII]-UMP uridylyl-removing enzyme</fullName>
            <shortName evidence="1">UR</shortName>
            <ecNumber evidence="1">3.1.4.-</ecNumber>
        </recommendedName>
    </domain>
</protein>
<comment type="function">
    <text evidence="1">Modifies, by uridylylation and deuridylylation, the PII regulatory proteins (GlnB and homologs), in response to the nitrogen status of the cell that GlnD senses through the glutamine level. Under low glutamine levels, catalyzes the conversion of the PII proteins and UTP to PII-UMP and PPi, while under higher glutamine levels, GlnD hydrolyzes PII-UMP to PII and UMP (deuridylylation). Thus, controls uridylylation state and activity of the PII proteins, and plays an important role in the regulation of nitrogen assimilation and metabolism.</text>
</comment>
<comment type="catalytic activity">
    <reaction evidence="1">
        <text>[protein-PII]-L-tyrosine + UTP = [protein-PII]-uridylyl-L-tyrosine + diphosphate</text>
        <dbReference type="Rhea" id="RHEA:13673"/>
        <dbReference type="Rhea" id="RHEA-COMP:12147"/>
        <dbReference type="Rhea" id="RHEA-COMP:12148"/>
        <dbReference type="ChEBI" id="CHEBI:33019"/>
        <dbReference type="ChEBI" id="CHEBI:46398"/>
        <dbReference type="ChEBI" id="CHEBI:46858"/>
        <dbReference type="ChEBI" id="CHEBI:90602"/>
        <dbReference type="EC" id="2.7.7.59"/>
    </reaction>
</comment>
<comment type="catalytic activity">
    <reaction evidence="1">
        <text>[protein-PII]-uridylyl-L-tyrosine + H2O = [protein-PII]-L-tyrosine + UMP + H(+)</text>
        <dbReference type="Rhea" id="RHEA:48600"/>
        <dbReference type="Rhea" id="RHEA-COMP:12147"/>
        <dbReference type="Rhea" id="RHEA-COMP:12148"/>
        <dbReference type="ChEBI" id="CHEBI:15377"/>
        <dbReference type="ChEBI" id="CHEBI:15378"/>
        <dbReference type="ChEBI" id="CHEBI:46858"/>
        <dbReference type="ChEBI" id="CHEBI:57865"/>
        <dbReference type="ChEBI" id="CHEBI:90602"/>
    </reaction>
</comment>
<comment type="cofactor">
    <cofactor evidence="1">
        <name>Mg(2+)</name>
        <dbReference type="ChEBI" id="CHEBI:18420"/>
    </cofactor>
</comment>
<comment type="activity regulation">
    <text evidence="1">Uridylyltransferase (UTase) activity is inhibited by glutamine, while glutamine activates uridylyl-removing (UR) activity.</text>
</comment>
<comment type="domain">
    <text evidence="1">Has four distinct domains: an N-terminal nucleotidyltransferase (NT) domain responsible for UTase activity, a central HD domain that encodes UR activity, and two C-terminal ACT domains that seem to have a role in glutamine sensing.</text>
</comment>
<comment type="similarity">
    <text evidence="1">Belongs to the GlnD family.</text>
</comment>
<dbReference type="EC" id="2.7.7.59" evidence="1"/>
<dbReference type="EC" id="3.1.4.-" evidence="1"/>
<dbReference type="EMBL" id="CP000802">
    <property type="protein sequence ID" value="ABV04567.1"/>
    <property type="molecule type" value="Genomic_DNA"/>
</dbReference>
<dbReference type="RefSeq" id="WP_001094571.1">
    <property type="nucleotide sequence ID" value="NC_009800.1"/>
</dbReference>
<dbReference type="SMR" id="A7ZWB3"/>
<dbReference type="GeneID" id="75202020"/>
<dbReference type="KEGG" id="ecx:EcHS_A0169"/>
<dbReference type="HOGENOM" id="CLU_012833_0_0_6"/>
<dbReference type="GO" id="GO:0008773">
    <property type="term" value="F:[protein-PII] uridylyltransferase activity"/>
    <property type="evidence" value="ECO:0007669"/>
    <property type="project" value="UniProtKB-UniRule"/>
</dbReference>
<dbReference type="GO" id="GO:0008081">
    <property type="term" value="F:phosphoric diester hydrolase activity"/>
    <property type="evidence" value="ECO:0007669"/>
    <property type="project" value="UniProtKB-UniRule"/>
</dbReference>
<dbReference type="GO" id="GO:0006808">
    <property type="term" value="P:regulation of nitrogen utilization"/>
    <property type="evidence" value="ECO:0007669"/>
    <property type="project" value="UniProtKB-UniRule"/>
</dbReference>
<dbReference type="CDD" id="cd04899">
    <property type="entry name" value="ACT_ACR-UUR-like_2"/>
    <property type="match status" value="1"/>
</dbReference>
<dbReference type="CDD" id="cd04900">
    <property type="entry name" value="ACT_UUR-like_1"/>
    <property type="match status" value="1"/>
</dbReference>
<dbReference type="CDD" id="cd00077">
    <property type="entry name" value="HDc"/>
    <property type="match status" value="1"/>
</dbReference>
<dbReference type="CDD" id="cd05401">
    <property type="entry name" value="NT_GlnE_GlnD_like"/>
    <property type="match status" value="1"/>
</dbReference>
<dbReference type="FunFam" id="1.10.3210.10:FF:000005">
    <property type="entry name" value="Bifunctional uridylyltransferase/uridylyl-removing enzyme"/>
    <property type="match status" value="1"/>
</dbReference>
<dbReference type="Gene3D" id="1.10.3210.10">
    <property type="entry name" value="Hypothetical protein af1432"/>
    <property type="match status" value="1"/>
</dbReference>
<dbReference type="HAMAP" id="MF_00277">
    <property type="entry name" value="PII_uridylyl_transf"/>
    <property type="match status" value="1"/>
</dbReference>
<dbReference type="InterPro" id="IPR045865">
    <property type="entry name" value="ACT-like_dom_sf"/>
</dbReference>
<dbReference type="InterPro" id="IPR002912">
    <property type="entry name" value="ACT_dom"/>
</dbReference>
<dbReference type="InterPro" id="IPR003607">
    <property type="entry name" value="HD/PDEase_dom"/>
</dbReference>
<dbReference type="InterPro" id="IPR006674">
    <property type="entry name" value="HD_domain"/>
</dbReference>
<dbReference type="InterPro" id="IPR043519">
    <property type="entry name" value="NT_sf"/>
</dbReference>
<dbReference type="InterPro" id="IPR013546">
    <property type="entry name" value="PII_UdlTrfase/GS_AdlTrfase"/>
</dbReference>
<dbReference type="InterPro" id="IPR002934">
    <property type="entry name" value="Polymerase_NTP_transf_dom"/>
</dbReference>
<dbReference type="InterPro" id="IPR010043">
    <property type="entry name" value="UTase/UR"/>
</dbReference>
<dbReference type="NCBIfam" id="NF002487">
    <property type="entry name" value="PRK01759.1"/>
    <property type="match status" value="1"/>
</dbReference>
<dbReference type="NCBIfam" id="NF003448">
    <property type="entry name" value="PRK05007.1"/>
    <property type="match status" value="1"/>
</dbReference>
<dbReference type="NCBIfam" id="TIGR01693">
    <property type="entry name" value="UTase_glnD"/>
    <property type="match status" value="1"/>
</dbReference>
<dbReference type="PANTHER" id="PTHR47320">
    <property type="entry name" value="BIFUNCTIONAL URIDYLYLTRANSFERASE/URIDYLYL-REMOVING ENZYME"/>
    <property type="match status" value="1"/>
</dbReference>
<dbReference type="PANTHER" id="PTHR47320:SF1">
    <property type="entry name" value="BIFUNCTIONAL URIDYLYLTRANSFERASE_URIDYLYL-REMOVING ENZYME"/>
    <property type="match status" value="1"/>
</dbReference>
<dbReference type="Pfam" id="PF01842">
    <property type="entry name" value="ACT"/>
    <property type="match status" value="2"/>
</dbReference>
<dbReference type="Pfam" id="PF08335">
    <property type="entry name" value="GlnD_UR_UTase"/>
    <property type="match status" value="1"/>
</dbReference>
<dbReference type="Pfam" id="PF01966">
    <property type="entry name" value="HD"/>
    <property type="match status" value="1"/>
</dbReference>
<dbReference type="Pfam" id="PF01909">
    <property type="entry name" value="NTP_transf_2"/>
    <property type="match status" value="1"/>
</dbReference>
<dbReference type="PIRSF" id="PIRSF006288">
    <property type="entry name" value="PII_uridyltransf"/>
    <property type="match status" value="1"/>
</dbReference>
<dbReference type="SMART" id="SM00471">
    <property type="entry name" value="HDc"/>
    <property type="match status" value="1"/>
</dbReference>
<dbReference type="SUPFAM" id="SSF55021">
    <property type="entry name" value="ACT-like"/>
    <property type="match status" value="2"/>
</dbReference>
<dbReference type="SUPFAM" id="SSF109604">
    <property type="entry name" value="HD-domain/PDEase-like"/>
    <property type="match status" value="1"/>
</dbReference>
<dbReference type="SUPFAM" id="SSF81301">
    <property type="entry name" value="Nucleotidyltransferase"/>
    <property type="match status" value="1"/>
</dbReference>
<dbReference type="SUPFAM" id="SSF81593">
    <property type="entry name" value="Nucleotidyltransferase substrate binding subunit/domain"/>
    <property type="match status" value="1"/>
</dbReference>
<dbReference type="PROSITE" id="PS51671">
    <property type="entry name" value="ACT"/>
    <property type="match status" value="2"/>
</dbReference>
<dbReference type="PROSITE" id="PS51831">
    <property type="entry name" value="HD"/>
    <property type="match status" value="1"/>
</dbReference>
<proteinExistence type="inferred from homology"/>
<sequence>MNTLPEQYANTALPTLPGQPQNPCVWPRDELTVGGIKAHIDTFQRWLGDAFDNGISAEQLIEARTEFIDQLLQRLWIEAGFSQIADLALVAVGGYGRGELHPLSDIDLLILSRKKLPDDQAQKVGELLTLLWDVKLEVGHSVRTLEECMLEGLSDLTVATNLIESRLLIGDVALFLELQKHIFSEGFWPSDKFYAAKVEEQNQRHQRYHGTSYNLEPDIKSSPGGLRDIHTLQWVARRHFGATSLDEMVGFGFLTSAERAELNECLHILWRIRFALHLVVSRYDNRLLFDRQLSVAQRLNYSGEGNEPVERMMKDYFRVTRRVSELNQMLLQLFDEAILALPADEKPRPIDDEFQLRGTLIDLRDETLFMRQPEAILRMFYTMVRNSAITGIYSTTLRQLRHARRHLQQPLCNIPEARKLFLSILRHPGAVRRGLLPMHRHSVLGAYMPQWSHIVGQMQFDLFHAYTVDEHTIRVMLKLESFASEETRQRHPLCVDVWPRLPSTELIFIAALFHDIAKGRGGDHSILGAQDVVHFAELHGLNSRETQLVAWLVRQHLLMSVTAQRRDIQDPEVIKQFAEEVQTENRLRYLVCLTVADICATNETLWNSWKQSLLRELYFATEKQLRRGMQNTPDMRERVRHHQLQALALLRMDNIDEEALHQIWSRCRANYFVRHSPNQLAWHARHLLQHDLSKPLVLLSPQATRGGTEIFIWSPDRPYLFAAVCAELDRRNLSVHDAQIFTTRDGMAMDTFIVLEPDGSPLSADRHEVIRFGLEQVLTQSSWQPPQPRRQPAKLRHFTVETEVTFLPTHTDRKSFLELIALDQPGLLARVGKIFADLGISLHGARITTIGERVEDLFIIATADRRALNNELQQEVHQRLTEALNPNDKG</sequence>
<gene>
    <name evidence="1" type="primary">glnD</name>
    <name type="ordered locus">EcHS_A0169</name>
</gene>
<reference key="1">
    <citation type="journal article" date="2008" name="J. Bacteriol.">
        <title>The pangenome structure of Escherichia coli: comparative genomic analysis of E. coli commensal and pathogenic isolates.</title>
        <authorList>
            <person name="Rasko D.A."/>
            <person name="Rosovitz M.J."/>
            <person name="Myers G.S.A."/>
            <person name="Mongodin E.F."/>
            <person name="Fricke W.F."/>
            <person name="Gajer P."/>
            <person name="Crabtree J."/>
            <person name="Sebaihia M."/>
            <person name="Thomson N.R."/>
            <person name="Chaudhuri R."/>
            <person name="Henderson I.R."/>
            <person name="Sperandio V."/>
            <person name="Ravel J."/>
        </authorList>
    </citation>
    <scope>NUCLEOTIDE SEQUENCE [LARGE SCALE GENOMIC DNA]</scope>
    <source>
        <strain>HS</strain>
    </source>
</reference>
<accession>A7ZWB3</accession>
<keyword id="KW-0378">Hydrolase</keyword>
<keyword id="KW-0460">Magnesium</keyword>
<keyword id="KW-0511">Multifunctional enzyme</keyword>
<keyword id="KW-0548">Nucleotidyltransferase</keyword>
<keyword id="KW-0677">Repeat</keyword>
<keyword id="KW-0808">Transferase</keyword>
<name>GLND_ECOHS</name>